<dbReference type="EMBL" id="X17016">
    <property type="protein sequence ID" value="CAA34882.1"/>
    <property type="molecule type" value="Genomic_DNA"/>
</dbReference>
<dbReference type="EMBL" id="M60327">
    <property type="protein sequence ID" value="AAA42505.1"/>
    <property type="molecule type" value="Genomic_DNA"/>
</dbReference>
<dbReference type="PIR" id="S09217">
    <property type="entry name" value="ERADN1"/>
</dbReference>
<dbReference type="PDB" id="2BZU">
    <property type="method" value="X-ray"/>
    <property type="resolution" value="1.50 A"/>
    <property type="chains" value="A=215-387"/>
</dbReference>
<dbReference type="PDB" id="2BZV">
    <property type="method" value="X-ray"/>
    <property type="resolution" value="1.15 A"/>
    <property type="chains" value="A=215-387"/>
</dbReference>
<dbReference type="PDBsum" id="2BZU"/>
<dbReference type="PDBsum" id="2BZV"/>
<dbReference type="SMR" id="P16883"/>
<dbReference type="EvolutionaryTrace" id="P16883"/>
<dbReference type="GO" id="GO:0042025">
    <property type="term" value="C:host cell nucleus"/>
    <property type="evidence" value="ECO:0007669"/>
    <property type="project" value="UniProtKB-SubCell"/>
</dbReference>
<dbReference type="GO" id="GO:0019028">
    <property type="term" value="C:viral capsid"/>
    <property type="evidence" value="ECO:0007669"/>
    <property type="project" value="UniProtKB-KW"/>
</dbReference>
<dbReference type="GO" id="GO:0098671">
    <property type="term" value="P:adhesion receptor-mediated virion attachment to host cell"/>
    <property type="evidence" value="ECO:0007669"/>
    <property type="project" value="UniProtKB-KW"/>
</dbReference>
<dbReference type="GO" id="GO:0007155">
    <property type="term" value="P:cell adhesion"/>
    <property type="evidence" value="ECO:0007669"/>
    <property type="project" value="InterPro"/>
</dbReference>
<dbReference type="GO" id="GO:0046718">
    <property type="term" value="P:symbiont entry into host cell"/>
    <property type="evidence" value="ECO:0007669"/>
    <property type="project" value="UniProtKB-KW"/>
</dbReference>
<dbReference type="Gene3D" id="6.20.10.20">
    <property type="match status" value="1"/>
</dbReference>
<dbReference type="Gene3D" id="2.60.90.10">
    <property type="entry name" value="Adenovirus pIV-related, attachment domain"/>
    <property type="match status" value="1"/>
</dbReference>
<dbReference type="InterPro" id="IPR000931">
    <property type="entry name" value="Adeno_fibre"/>
</dbReference>
<dbReference type="InterPro" id="IPR000978">
    <property type="entry name" value="Adeno_fibre_knob"/>
</dbReference>
<dbReference type="InterPro" id="IPR000939">
    <property type="entry name" value="Adenobir_fibre_prot_rpt/shaft"/>
</dbReference>
<dbReference type="InterPro" id="IPR008982">
    <property type="entry name" value="Adenovirus_pIV-like_att"/>
</dbReference>
<dbReference type="InterPro" id="IPR009013">
    <property type="entry name" value="Attachment_protein_shaft_sf"/>
</dbReference>
<dbReference type="Pfam" id="PF00541">
    <property type="entry name" value="Adeno_knob"/>
    <property type="match status" value="1"/>
</dbReference>
<dbReference type="Pfam" id="PF00608">
    <property type="entry name" value="Adeno_shaft"/>
    <property type="match status" value="3"/>
</dbReference>
<dbReference type="PRINTS" id="PR00307">
    <property type="entry name" value="ADENOVSFIBRE"/>
</dbReference>
<dbReference type="SUPFAM" id="SSF51225">
    <property type="entry name" value="Fibre shaft of virus attachment proteins"/>
    <property type="match status" value="2"/>
</dbReference>
<dbReference type="SUPFAM" id="SSF49835">
    <property type="entry name" value="Virus attachment protein globular domain"/>
    <property type="match status" value="1"/>
</dbReference>
<organismHost>
    <name type="scientific">Homo sapiens</name>
    <name type="common">Human</name>
    <dbReference type="NCBI Taxonomy" id="9606"/>
</organismHost>
<name>SPIK2_ADE41</name>
<keyword id="KW-0002">3D-structure</keyword>
<keyword id="KW-0167">Capsid protein</keyword>
<keyword id="KW-1048">Host nucleus</keyword>
<keyword id="KW-0945">Host-virus interaction</keyword>
<keyword id="KW-0426">Late protein</keyword>
<keyword id="KW-1233">Viral attachment to host adhesion receptor</keyword>
<keyword id="KW-1161">Viral attachment to host cell</keyword>
<keyword id="KW-0946">Virion</keyword>
<keyword id="KW-1160">Virus entry into host cell</keyword>
<protein>
    <recommendedName>
        <fullName>Fiber protein 2</fullName>
    </recommendedName>
</protein>
<accession>P16883</accession>
<feature type="chain" id="PRO_0000221802" description="Fiber protein 2">
    <location>
        <begin position="1"/>
        <end position="387"/>
    </location>
</feature>
<feature type="strand" evidence="4">
    <location>
        <begin position="232"/>
        <end position="234"/>
    </location>
</feature>
<feature type="strand" evidence="4">
    <location>
        <begin position="244"/>
        <end position="246"/>
    </location>
</feature>
<feature type="strand" evidence="4">
    <location>
        <begin position="250"/>
        <end position="259"/>
    </location>
</feature>
<feature type="strand" evidence="4">
    <location>
        <begin position="262"/>
        <end position="271"/>
    </location>
</feature>
<feature type="helix" evidence="4">
    <location>
        <begin position="274"/>
        <end position="277"/>
    </location>
</feature>
<feature type="strand" evidence="4">
    <location>
        <begin position="280"/>
        <end position="290"/>
    </location>
</feature>
<feature type="strand" evidence="4">
    <location>
        <begin position="298"/>
        <end position="301"/>
    </location>
</feature>
<feature type="helix" evidence="4">
    <location>
        <begin position="303"/>
        <end position="305"/>
    </location>
</feature>
<feature type="turn" evidence="4">
    <location>
        <begin position="309"/>
        <end position="311"/>
    </location>
</feature>
<feature type="helix" evidence="4">
    <location>
        <begin position="319"/>
        <end position="321"/>
    </location>
</feature>
<feature type="turn" evidence="4">
    <location>
        <begin position="325"/>
        <end position="327"/>
    </location>
</feature>
<feature type="strand" evidence="3">
    <location>
        <begin position="339"/>
        <end position="342"/>
    </location>
</feature>
<feature type="turn" evidence="3">
    <location>
        <begin position="343"/>
        <end position="346"/>
    </location>
</feature>
<feature type="strand" evidence="4">
    <location>
        <begin position="349"/>
        <end position="353"/>
    </location>
</feature>
<feature type="strand" evidence="4">
    <location>
        <begin position="356"/>
        <end position="367"/>
    </location>
</feature>
<feature type="strand" evidence="4">
    <location>
        <begin position="379"/>
        <end position="385"/>
    </location>
</feature>
<reference key="1">
    <citation type="journal article" date="1990" name="Nucleic Acids Res.">
        <title>Human enteric adenovirus type 41 (Tak) contains a second fiber protein gene.</title>
        <authorList>
            <person name="Pieniazek N.J."/>
            <person name="Slemenda S.B."/>
            <person name="Pieniazek D."/>
            <person name="Velarde J. Jr."/>
            <person name="Luftig R.B."/>
        </authorList>
    </citation>
    <scope>NUCLEOTIDE SEQUENCE [GENOMIC DNA]</scope>
    <source>
        <strain>Tak</strain>
    </source>
</reference>
<reference key="2">
    <citation type="journal article" date="1990" name="Virology">
        <title>Fiber sequence heterogeneity in subgroup F adenoviruses.</title>
        <authorList>
            <person name="Kidd A.H."/>
            <person name="Erasmus M.J."/>
            <person name="Tiemessen C.T."/>
        </authorList>
    </citation>
    <scope>NUCLEOTIDE SEQUENCE [GENOMIC DNA] OF 337-387</scope>
    <source>
        <strain>FB585</strain>
    </source>
</reference>
<reference key="3">
    <citation type="journal article" date="2005" name="J. Virol.">
        <title>Adenovirus receptors.</title>
        <authorList>
            <person name="Zhang Y."/>
            <person name="Bergelson J.M."/>
        </authorList>
    </citation>
    <scope>REVIEW</scope>
</reference>
<evidence type="ECO:0000250" key="1"/>
<evidence type="ECO:0000305" key="2"/>
<evidence type="ECO:0007829" key="3">
    <source>
        <dbReference type="PDB" id="2BZU"/>
    </source>
</evidence>
<evidence type="ECO:0007829" key="4">
    <source>
        <dbReference type="PDB" id="2BZV"/>
    </source>
</evidence>
<proteinExistence type="evidence at protein level"/>
<sequence>MKRTRIEDDFNPVYPYDTFSTPSIPYVAPPFVSSDGLQEKPPGVLALKYTDPITTNAKHELTLKLGSNITLENGLLSATVPTVSPPLTNSNNSLGLATSAPIAVSANSLTLATAAPLTVSNNQLSINAGRGLVITNNALTVNPTGALGFNNTGALQLNAAGGMRVDGANLILHVAYPFEAINQLTLRLENGLEVTSGGKLNVKLGSGLQFDSNGRIAISNSNRTRSVPSLTTIWSISPTPNCSIYETQDANLFLCLTKNGAHVLGTITIKGLKGALREMHDNALSLKLPFDNQGNLLNCALESSTWRYQETNAVASNALTFMPNSTVYPRNKTAHPGNMLIQISPNITFSVVYNEINSGYAFTFKWSAEPGKPFHPPTAVFCYITEQ</sequence>
<organism>
    <name type="scientific">Human adenovirus F serotype 41</name>
    <name type="common">HAdV-41</name>
    <name type="synonym">Human adenovirus 41</name>
    <dbReference type="NCBI Taxonomy" id="10524"/>
    <lineage>
        <taxon>Viruses</taxon>
        <taxon>Varidnaviria</taxon>
        <taxon>Bamfordvirae</taxon>
        <taxon>Preplasmiviricota</taxon>
        <taxon>Tectiliviricetes</taxon>
        <taxon>Rowavirales</taxon>
        <taxon>Adenoviridae</taxon>
        <taxon>Mastadenovirus</taxon>
        <taxon>Human mastadenovirus F</taxon>
    </lineage>
</organism>
<comment type="function">
    <text evidence="1">Forms spikes that protrude from each vertex of the icosahedral capsid. Interacts with host receptor CXCAR to provide virion initial attachment to target cell. Fiber proteins are shed during virus entry, when virus is still at the cell surface (By similarity).</text>
</comment>
<comment type="subunit">
    <text evidence="1">Homotrimer. Interacts with host receptor CXCAR. Interacts (via N-terminal tail region) with pentons (By similarity).</text>
</comment>
<comment type="subcellular location">
    <subcellularLocation>
        <location evidence="1">Virion</location>
    </subcellularLocation>
    <subcellularLocation>
        <location evidence="1">Host nucleus</location>
    </subcellularLocation>
    <text evidence="1">Anchored to the pentons, protrudes from the virion surface.</text>
</comment>
<comment type="induction">
    <text>Expressed in the late phase of the viral replicative cycle.</text>
</comment>
<comment type="domain">
    <text evidence="1">The tail region anchors the fiber to penton base capsomers, whereas the shaft, built from several repeated motifs, allows the knob to protrude from the virion.</text>
</comment>
<comment type="miscellaneous">
    <text evidence="1">All late proteins expressed from the major late promoter are produced by alternative splicing and alternative polyadenylation of the same gene giving rise to non-overlapping ORFs. A leader sequence is present in the N-terminus of all these mRNAs and is recognized by the viral shutoff protein to provide expression although conventional translation via ribosome scanning from the cap has been shut off in the host cell (By similarity).</text>
</comment>
<comment type="similarity">
    <text evidence="2">Belongs to the adenoviridae fiber family.</text>
</comment>